<feature type="chain" id="PRO_0000348199" description="Uncharacterized protein DDB_G0267772">
    <location>
        <begin position="1"/>
        <end position="78"/>
    </location>
</feature>
<sequence length="78" mass="9003">MTILKSIENIMVNRNSTNKLMNNFTNNSNYNNNSNDFINGYIDNNKPLQTIHGNSFVTAIMSPNKCHYPLFNKCPEKF</sequence>
<accession>Q55G84</accession>
<keyword id="KW-1185">Reference proteome</keyword>
<gene>
    <name type="ORF">DDB_G0267772</name>
</gene>
<protein>
    <recommendedName>
        <fullName>Uncharacterized protein DDB_G0267772</fullName>
    </recommendedName>
</protein>
<proteinExistence type="predicted"/>
<dbReference type="EMBL" id="AAFI02000003">
    <property type="protein sequence ID" value="EAL73339.1"/>
    <property type="molecule type" value="Genomic_DNA"/>
</dbReference>
<dbReference type="RefSeq" id="XP_647299.1">
    <property type="nucleotide sequence ID" value="XM_642207.1"/>
</dbReference>
<dbReference type="PaxDb" id="44689-DDB0189536"/>
<dbReference type="EnsemblProtists" id="EAL73339">
    <property type="protein sequence ID" value="EAL73339"/>
    <property type="gene ID" value="DDB_G0267772"/>
</dbReference>
<dbReference type="GeneID" id="8616108"/>
<dbReference type="KEGG" id="ddi:DDB_G0267772"/>
<dbReference type="dictyBase" id="DDB_G0267772"/>
<dbReference type="VEuPathDB" id="AmoebaDB:DDB_G0267772"/>
<dbReference type="HOGENOM" id="CLU_2627118_0_0_1"/>
<dbReference type="InParanoid" id="Q55G84"/>
<dbReference type="PRO" id="PR:Q55G84"/>
<dbReference type="Proteomes" id="UP000002195">
    <property type="component" value="Chromosome 1"/>
</dbReference>
<name>Y9536_DICDI</name>
<organism>
    <name type="scientific">Dictyostelium discoideum</name>
    <name type="common">Social amoeba</name>
    <dbReference type="NCBI Taxonomy" id="44689"/>
    <lineage>
        <taxon>Eukaryota</taxon>
        <taxon>Amoebozoa</taxon>
        <taxon>Evosea</taxon>
        <taxon>Eumycetozoa</taxon>
        <taxon>Dictyostelia</taxon>
        <taxon>Dictyosteliales</taxon>
        <taxon>Dictyosteliaceae</taxon>
        <taxon>Dictyostelium</taxon>
    </lineage>
</organism>
<reference key="1">
    <citation type="journal article" date="2005" name="Nature">
        <title>The genome of the social amoeba Dictyostelium discoideum.</title>
        <authorList>
            <person name="Eichinger L."/>
            <person name="Pachebat J.A."/>
            <person name="Gloeckner G."/>
            <person name="Rajandream M.A."/>
            <person name="Sucgang R."/>
            <person name="Berriman M."/>
            <person name="Song J."/>
            <person name="Olsen R."/>
            <person name="Szafranski K."/>
            <person name="Xu Q."/>
            <person name="Tunggal B."/>
            <person name="Kummerfeld S."/>
            <person name="Madera M."/>
            <person name="Konfortov B.A."/>
            <person name="Rivero F."/>
            <person name="Bankier A.T."/>
            <person name="Lehmann R."/>
            <person name="Hamlin N."/>
            <person name="Davies R."/>
            <person name="Gaudet P."/>
            <person name="Fey P."/>
            <person name="Pilcher K."/>
            <person name="Chen G."/>
            <person name="Saunders D."/>
            <person name="Sodergren E.J."/>
            <person name="Davis P."/>
            <person name="Kerhornou A."/>
            <person name="Nie X."/>
            <person name="Hall N."/>
            <person name="Anjard C."/>
            <person name="Hemphill L."/>
            <person name="Bason N."/>
            <person name="Farbrother P."/>
            <person name="Desany B."/>
            <person name="Just E."/>
            <person name="Morio T."/>
            <person name="Rost R."/>
            <person name="Churcher C.M."/>
            <person name="Cooper J."/>
            <person name="Haydock S."/>
            <person name="van Driessche N."/>
            <person name="Cronin A."/>
            <person name="Goodhead I."/>
            <person name="Muzny D.M."/>
            <person name="Mourier T."/>
            <person name="Pain A."/>
            <person name="Lu M."/>
            <person name="Harper D."/>
            <person name="Lindsay R."/>
            <person name="Hauser H."/>
            <person name="James K.D."/>
            <person name="Quiles M."/>
            <person name="Madan Babu M."/>
            <person name="Saito T."/>
            <person name="Buchrieser C."/>
            <person name="Wardroper A."/>
            <person name="Felder M."/>
            <person name="Thangavelu M."/>
            <person name="Johnson D."/>
            <person name="Knights A."/>
            <person name="Loulseged H."/>
            <person name="Mungall K.L."/>
            <person name="Oliver K."/>
            <person name="Price C."/>
            <person name="Quail M.A."/>
            <person name="Urushihara H."/>
            <person name="Hernandez J."/>
            <person name="Rabbinowitsch E."/>
            <person name="Steffen D."/>
            <person name="Sanders M."/>
            <person name="Ma J."/>
            <person name="Kohara Y."/>
            <person name="Sharp S."/>
            <person name="Simmonds M.N."/>
            <person name="Spiegler S."/>
            <person name="Tivey A."/>
            <person name="Sugano S."/>
            <person name="White B."/>
            <person name="Walker D."/>
            <person name="Woodward J.R."/>
            <person name="Winckler T."/>
            <person name="Tanaka Y."/>
            <person name="Shaulsky G."/>
            <person name="Schleicher M."/>
            <person name="Weinstock G.M."/>
            <person name="Rosenthal A."/>
            <person name="Cox E.C."/>
            <person name="Chisholm R.L."/>
            <person name="Gibbs R.A."/>
            <person name="Loomis W.F."/>
            <person name="Platzer M."/>
            <person name="Kay R.R."/>
            <person name="Williams J.G."/>
            <person name="Dear P.H."/>
            <person name="Noegel A.A."/>
            <person name="Barrell B.G."/>
            <person name="Kuspa A."/>
        </authorList>
    </citation>
    <scope>NUCLEOTIDE SEQUENCE [LARGE SCALE GENOMIC DNA]</scope>
    <source>
        <strain>AX4</strain>
    </source>
</reference>